<evidence type="ECO:0000250" key="1"/>
<evidence type="ECO:0000250" key="2">
    <source>
        <dbReference type="UniProtKB" id="P41227"/>
    </source>
</evidence>
<evidence type="ECO:0000250" key="3">
    <source>
        <dbReference type="UniProtKB" id="Q9BSU3"/>
    </source>
</evidence>
<evidence type="ECO:0000255" key="4">
    <source>
        <dbReference type="PROSITE-ProRule" id="PRU00532"/>
    </source>
</evidence>
<evidence type="ECO:0000256" key="5">
    <source>
        <dbReference type="SAM" id="MobiDB-lite"/>
    </source>
</evidence>
<evidence type="ECO:0000305" key="6"/>
<protein>
    <recommendedName>
        <fullName>N-alpha-acetyltransferase 11</fullName>
        <ecNumber evidence="2">2.3.1.255</ecNumber>
    </recommendedName>
    <alternativeName>
        <fullName>N-terminal acetyltransferase complex ARD1 subunit homolog B</fullName>
    </alternativeName>
    <alternativeName>
        <fullName>NatA catalytic subunit Naa11</fullName>
    </alternativeName>
</protein>
<dbReference type="EC" id="2.3.1.255" evidence="2"/>
<dbReference type="EMBL" id="AK133248">
    <property type="protein sequence ID" value="BAE21577.1"/>
    <property type="molecule type" value="mRNA"/>
</dbReference>
<dbReference type="EMBL" id="AK135863">
    <property type="protein sequence ID" value="BAE22702.1"/>
    <property type="molecule type" value="mRNA"/>
</dbReference>
<dbReference type="EMBL" id="BC145776">
    <property type="protein sequence ID" value="AAI45777.1"/>
    <property type="molecule type" value="mRNA"/>
</dbReference>
<dbReference type="CCDS" id="CCDS19453.1"/>
<dbReference type="RefSeq" id="NP_001028363.1">
    <property type="nucleotide sequence ID" value="NM_001033191.2"/>
</dbReference>
<dbReference type="SMR" id="Q3UX61"/>
<dbReference type="BioGRID" id="220667">
    <property type="interactions" value="25"/>
</dbReference>
<dbReference type="FunCoup" id="Q3UX61">
    <property type="interactions" value="405"/>
</dbReference>
<dbReference type="IntAct" id="Q3UX61">
    <property type="interactions" value="25"/>
</dbReference>
<dbReference type="STRING" id="10090.ENSMUSP00000057336"/>
<dbReference type="iPTMnet" id="Q3UX61"/>
<dbReference type="PhosphoSitePlus" id="Q3UX61"/>
<dbReference type="SwissPalm" id="Q3UX61"/>
<dbReference type="jPOST" id="Q3UX61"/>
<dbReference type="PaxDb" id="10090-ENSMUSP00000057336"/>
<dbReference type="ProteomicsDB" id="252636"/>
<dbReference type="Pumba" id="Q3UX61"/>
<dbReference type="Ensembl" id="ENSMUST00000060265.6">
    <property type="protein sequence ID" value="ENSMUSP00000057336.5"/>
    <property type="gene ID" value="ENSMUSG00000046000.6"/>
</dbReference>
<dbReference type="GeneID" id="97243"/>
<dbReference type="KEGG" id="mmu:97243"/>
<dbReference type="UCSC" id="uc008yfw.1">
    <property type="organism name" value="mouse"/>
</dbReference>
<dbReference type="AGR" id="MGI:2141314"/>
<dbReference type="CTD" id="84779"/>
<dbReference type="MGI" id="MGI:2141314">
    <property type="gene designation" value="Naa11"/>
</dbReference>
<dbReference type="VEuPathDB" id="HostDB:ENSMUSG00000046000"/>
<dbReference type="eggNOG" id="KOG3235">
    <property type="taxonomic scope" value="Eukaryota"/>
</dbReference>
<dbReference type="GeneTree" id="ENSGT00940000164242"/>
<dbReference type="HOGENOM" id="CLU_013985_7_0_1"/>
<dbReference type="InParanoid" id="Q3UX61"/>
<dbReference type="OMA" id="MKFWMYH"/>
<dbReference type="OrthoDB" id="25586at2759"/>
<dbReference type="PhylomeDB" id="Q3UX61"/>
<dbReference type="TreeFam" id="TF300078"/>
<dbReference type="BRENDA" id="2.3.1.255">
    <property type="organism ID" value="3474"/>
</dbReference>
<dbReference type="BioGRID-ORCS" id="97243">
    <property type="hits" value="1 hit in 77 CRISPR screens"/>
</dbReference>
<dbReference type="PRO" id="PR:Q3UX61"/>
<dbReference type="Proteomes" id="UP000000589">
    <property type="component" value="Chromosome 5"/>
</dbReference>
<dbReference type="RNAct" id="Q3UX61">
    <property type="molecule type" value="protein"/>
</dbReference>
<dbReference type="Bgee" id="ENSMUSG00000046000">
    <property type="expression patterns" value="Expressed in secondary oocyte and 15 other cell types or tissues"/>
</dbReference>
<dbReference type="ExpressionAtlas" id="Q3UX61">
    <property type="expression patterns" value="baseline and differential"/>
</dbReference>
<dbReference type="GO" id="GO:0031415">
    <property type="term" value="C:NatA complex"/>
    <property type="evidence" value="ECO:0007669"/>
    <property type="project" value="InterPro"/>
</dbReference>
<dbReference type="GO" id="GO:0005634">
    <property type="term" value="C:nucleus"/>
    <property type="evidence" value="ECO:0007669"/>
    <property type="project" value="UniProtKB-SubCell"/>
</dbReference>
<dbReference type="GO" id="GO:1990189">
    <property type="term" value="F:protein N-terminal-serine acetyltransferase activity"/>
    <property type="evidence" value="ECO:0007669"/>
    <property type="project" value="RHEA"/>
</dbReference>
<dbReference type="GO" id="GO:0008999">
    <property type="term" value="F:protein-N-terminal-alanine acetyltransferase activity"/>
    <property type="evidence" value="ECO:0007669"/>
    <property type="project" value="RHEA"/>
</dbReference>
<dbReference type="CDD" id="cd04301">
    <property type="entry name" value="NAT_SF"/>
    <property type="match status" value="1"/>
</dbReference>
<dbReference type="FunFam" id="3.40.630.30:FF:000014">
    <property type="entry name" value="N-alpha-acetyltransferase 10 isoform X1"/>
    <property type="match status" value="1"/>
</dbReference>
<dbReference type="Gene3D" id="3.40.630.30">
    <property type="match status" value="1"/>
</dbReference>
<dbReference type="InterPro" id="IPR016181">
    <property type="entry name" value="Acyl_CoA_acyltransferase"/>
</dbReference>
<dbReference type="InterPro" id="IPR045047">
    <property type="entry name" value="Ard1-like"/>
</dbReference>
<dbReference type="InterPro" id="IPR000182">
    <property type="entry name" value="GNAT_dom"/>
</dbReference>
<dbReference type="PANTHER" id="PTHR23091:SF282">
    <property type="entry name" value="N-ALPHA-ACETYLTRANSFERASE 11"/>
    <property type="match status" value="1"/>
</dbReference>
<dbReference type="PANTHER" id="PTHR23091">
    <property type="entry name" value="N-TERMINAL ACETYLTRANSFERASE"/>
    <property type="match status" value="1"/>
</dbReference>
<dbReference type="Pfam" id="PF00583">
    <property type="entry name" value="Acetyltransf_1"/>
    <property type="match status" value="1"/>
</dbReference>
<dbReference type="SUPFAM" id="SSF55729">
    <property type="entry name" value="Acyl-CoA N-acyltransferases (Nat)"/>
    <property type="match status" value="1"/>
</dbReference>
<dbReference type="PROSITE" id="PS51186">
    <property type="entry name" value="GNAT"/>
    <property type="match status" value="1"/>
</dbReference>
<feature type="chain" id="PRO_0000305010" description="N-alpha-acetyltransferase 11">
    <location>
        <begin position="1"/>
        <end position="218"/>
    </location>
</feature>
<feature type="domain" description="N-acetyltransferase" evidence="4">
    <location>
        <begin position="1"/>
        <end position="152"/>
    </location>
</feature>
<feature type="region of interest" description="Interaction with NAA15" evidence="1">
    <location>
        <begin position="1"/>
        <end position="58"/>
    </location>
</feature>
<feature type="region of interest" description="Disordered" evidence="5">
    <location>
        <begin position="175"/>
        <end position="218"/>
    </location>
</feature>
<feature type="compositionally biased region" description="Low complexity" evidence="5">
    <location>
        <begin position="196"/>
        <end position="205"/>
    </location>
</feature>
<feature type="compositionally biased region" description="Acidic residues" evidence="5">
    <location>
        <begin position="209"/>
        <end position="218"/>
    </location>
</feature>
<feature type="sequence conflict" description="In Ref. 1; BAE21577." evidence="6" ref="1">
    <original>G</original>
    <variation>V</variation>
    <location>
        <position position="141"/>
    </location>
</feature>
<comment type="function">
    <text evidence="3">Displays alpha (N-terminal) acetyltransferase activity. Proposed alternative catalytic subunit of the N-terminal acetyltransferase A (NatA) complex.</text>
</comment>
<comment type="catalytic activity">
    <reaction evidence="2">
        <text>N-terminal glycyl-[protein] + acetyl-CoA = N-terminal N(alpha)-acetylglycyl-[protein] + CoA + H(+)</text>
        <dbReference type="Rhea" id="RHEA:50496"/>
        <dbReference type="Rhea" id="RHEA-COMP:12666"/>
        <dbReference type="Rhea" id="RHEA-COMP:12700"/>
        <dbReference type="ChEBI" id="CHEBI:15378"/>
        <dbReference type="ChEBI" id="CHEBI:57287"/>
        <dbReference type="ChEBI" id="CHEBI:57288"/>
        <dbReference type="ChEBI" id="CHEBI:64723"/>
        <dbReference type="ChEBI" id="CHEBI:133369"/>
        <dbReference type="EC" id="2.3.1.255"/>
    </reaction>
</comment>
<comment type="catalytic activity">
    <reaction evidence="2">
        <text>N-terminal L-alanyl-[protein] + acetyl-CoA = N-terminal N(alpha)-acetyl-L-alanyl-[protein] + CoA + H(+)</text>
        <dbReference type="Rhea" id="RHEA:50500"/>
        <dbReference type="Rhea" id="RHEA-COMP:12701"/>
        <dbReference type="Rhea" id="RHEA-COMP:12702"/>
        <dbReference type="ChEBI" id="CHEBI:15378"/>
        <dbReference type="ChEBI" id="CHEBI:57287"/>
        <dbReference type="ChEBI" id="CHEBI:57288"/>
        <dbReference type="ChEBI" id="CHEBI:64718"/>
        <dbReference type="ChEBI" id="CHEBI:83683"/>
        <dbReference type="EC" id="2.3.1.255"/>
    </reaction>
</comment>
<comment type="catalytic activity">
    <reaction evidence="2">
        <text>N-terminal L-seryl-[protein] + acetyl-CoA = N-terminal N(alpha)-acetyl-L-seryl-[protein] + CoA + H(+)</text>
        <dbReference type="Rhea" id="RHEA:50504"/>
        <dbReference type="Rhea" id="RHEA-COMP:12703"/>
        <dbReference type="Rhea" id="RHEA-COMP:12704"/>
        <dbReference type="ChEBI" id="CHEBI:15378"/>
        <dbReference type="ChEBI" id="CHEBI:57287"/>
        <dbReference type="ChEBI" id="CHEBI:57288"/>
        <dbReference type="ChEBI" id="CHEBI:64738"/>
        <dbReference type="ChEBI" id="CHEBI:83690"/>
        <dbReference type="EC" id="2.3.1.255"/>
    </reaction>
</comment>
<comment type="catalytic activity">
    <reaction evidence="2">
        <text>N-terminal L-valyl-[protein] + acetyl-CoA = N-terminal N(alpha)-acetyl-L-valyl-[protein] + CoA + H(+)</text>
        <dbReference type="Rhea" id="RHEA:50508"/>
        <dbReference type="Rhea" id="RHEA-COMP:12705"/>
        <dbReference type="Rhea" id="RHEA-COMP:12706"/>
        <dbReference type="ChEBI" id="CHEBI:15378"/>
        <dbReference type="ChEBI" id="CHEBI:57287"/>
        <dbReference type="ChEBI" id="CHEBI:57288"/>
        <dbReference type="ChEBI" id="CHEBI:64741"/>
        <dbReference type="ChEBI" id="CHEBI:133371"/>
        <dbReference type="EC" id="2.3.1.255"/>
    </reaction>
</comment>
<comment type="catalytic activity">
    <reaction evidence="2">
        <text>N-terminal L-cysteinyl-[protein] + acetyl-CoA = N-terminal N(alpha)-acetyl-L-cysteinyl-[protein] + CoA + H(+)</text>
        <dbReference type="Rhea" id="RHEA:50512"/>
        <dbReference type="Rhea" id="RHEA-COMP:12707"/>
        <dbReference type="Rhea" id="RHEA-COMP:12708"/>
        <dbReference type="ChEBI" id="CHEBI:15378"/>
        <dbReference type="ChEBI" id="CHEBI:57287"/>
        <dbReference type="ChEBI" id="CHEBI:57288"/>
        <dbReference type="ChEBI" id="CHEBI:65250"/>
        <dbReference type="ChEBI" id="CHEBI:133372"/>
        <dbReference type="EC" id="2.3.1.255"/>
    </reaction>
</comment>
<comment type="catalytic activity">
    <reaction evidence="2">
        <text>N-terminal L-threonyl-[protein] + acetyl-CoA = N-terminal N(alpha)-acetyl-L-threonyl-[protein] + CoA + H(+)</text>
        <dbReference type="Rhea" id="RHEA:50516"/>
        <dbReference type="Rhea" id="RHEA-COMP:12709"/>
        <dbReference type="Rhea" id="RHEA-COMP:12710"/>
        <dbReference type="ChEBI" id="CHEBI:15378"/>
        <dbReference type="ChEBI" id="CHEBI:57287"/>
        <dbReference type="ChEBI" id="CHEBI:57288"/>
        <dbReference type="ChEBI" id="CHEBI:64739"/>
        <dbReference type="ChEBI" id="CHEBI:133375"/>
        <dbReference type="EC" id="2.3.1.255"/>
    </reaction>
</comment>
<comment type="subunit">
    <text evidence="3">Component of the N-terminal acetyltransferase A (NatA) complex composed of NAA11 and NAA15. Interacts with HIF1A.</text>
</comment>
<comment type="subcellular location">
    <subcellularLocation>
        <location evidence="3">Cytoplasm</location>
    </subcellularLocation>
    <subcellularLocation>
        <location evidence="3">Nucleus</location>
    </subcellularLocation>
</comment>
<comment type="similarity">
    <text evidence="6">Belongs to the acetyltransferase family. ARD1 subfamily.</text>
</comment>
<gene>
    <name type="primary">Naa11</name>
    <name type="synonym">Ard1b</name>
    <name type="synonym">Ard2</name>
</gene>
<reference key="1">
    <citation type="journal article" date="2005" name="Science">
        <title>The transcriptional landscape of the mammalian genome.</title>
        <authorList>
            <person name="Carninci P."/>
            <person name="Kasukawa T."/>
            <person name="Katayama S."/>
            <person name="Gough J."/>
            <person name="Frith M.C."/>
            <person name="Maeda N."/>
            <person name="Oyama R."/>
            <person name="Ravasi T."/>
            <person name="Lenhard B."/>
            <person name="Wells C."/>
            <person name="Kodzius R."/>
            <person name="Shimokawa K."/>
            <person name="Bajic V.B."/>
            <person name="Brenner S.E."/>
            <person name="Batalov S."/>
            <person name="Forrest A.R."/>
            <person name="Zavolan M."/>
            <person name="Davis M.J."/>
            <person name="Wilming L.G."/>
            <person name="Aidinis V."/>
            <person name="Allen J.E."/>
            <person name="Ambesi-Impiombato A."/>
            <person name="Apweiler R."/>
            <person name="Aturaliya R.N."/>
            <person name="Bailey T.L."/>
            <person name="Bansal M."/>
            <person name="Baxter L."/>
            <person name="Beisel K.W."/>
            <person name="Bersano T."/>
            <person name="Bono H."/>
            <person name="Chalk A.M."/>
            <person name="Chiu K.P."/>
            <person name="Choudhary V."/>
            <person name="Christoffels A."/>
            <person name="Clutterbuck D.R."/>
            <person name="Crowe M.L."/>
            <person name="Dalla E."/>
            <person name="Dalrymple B.P."/>
            <person name="de Bono B."/>
            <person name="Della Gatta G."/>
            <person name="di Bernardo D."/>
            <person name="Down T."/>
            <person name="Engstrom P."/>
            <person name="Fagiolini M."/>
            <person name="Faulkner G."/>
            <person name="Fletcher C.F."/>
            <person name="Fukushima T."/>
            <person name="Furuno M."/>
            <person name="Futaki S."/>
            <person name="Gariboldi M."/>
            <person name="Georgii-Hemming P."/>
            <person name="Gingeras T.R."/>
            <person name="Gojobori T."/>
            <person name="Green R.E."/>
            <person name="Gustincich S."/>
            <person name="Harbers M."/>
            <person name="Hayashi Y."/>
            <person name="Hensch T.K."/>
            <person name="Hirokawa N."/>
            <person name="Hill D."/>
            <person name="Huminiecki L."/>
            <person name="Iacono M."/>
            <person name="Ikeo K."/>
            <person name="Iwama A."/>
            <person name="Ishikawa T."/>
            <person name="Jakt M."/>
            <person name="Kanapin A."/>
            <person name="Katoh M."/>
            <person name="Kawasawa Y."/>
            <person name="Kelso J."/>
            <person name="Kitamura H."/>
            <person name="Kitano H."/>
            <person name="Kollias G."/>
            <person name="Krishnan S.P."/>
            <person name="Kruger A."/>
            <person name="Kummerfeld S.K."/>
            <person name="Kurochkin I.V."/>
            <person name="Lareau L.F."/>
            <person name="Lazarevic D."/>
            <person name="Lipovich L."/>
            <person name="Liu J."/>
            <person name="Liuni S."/>
            <person name="McWilliam S."/>
            <person name="Madan Babu M."/>
            <person name="Madera M."/>
            <person name="Marchionni L."/>
            <person name="Matsuda H."/>
            <person name="Matsuzawa S."/>
            <person name="Miki H."/>
            <person name="Mignone F."/>
            <person name="Miyake S."/>
            <person name="Morris K."/>
            <person name="Mottagui-Tabar S."/>
            <person name="Mulder N."/>
            <person name="Nakano N."/>
            <person name="Nakauchi H."/>
            <person name="Ng P."/>
            <person name="Nilsson R."/>
            <person name="Nishiguchi S."/>
            <person name="Nishikawa S."/>
            <person name="Nori F."/>
            <person name="Ohara O."/>
            <person name="Okazaki Y."/>
            <person name="Orlando V."/>
            <person name="Pang K.C."/>
            <person name="Pavan W.J."/>
            <person name="Pavesi G."/>
            <person name="Pesole G."/>
            <person name="Petrovsky N."/>
            <person name="Piazza S."/>
            <person name="Reed J."/>
            <person name="Reid J.F."/>
            <person name="Ring B.Z."/>
            <person name="Ringwald M."/>
            <person name="Rost B."/>
            <person name="Ruan Y."/>
            <person name="Salzberg S.L."/>
            <person name="Sandelin A."/>
            <person name="Schneider C."/>
            <person name="Schoenbach C."/>
            <person name="Sekiguchi K."/>
            <person name="Semple C.A."/>
            <person name="Seno S."/>
            <person name="Sessa L."/>
            <person name="Sheng Y."/>
            <person name="Shibata Y."/>
            <person name="Shimada H."/>
            <person name="Shimada K."/>
            <person name="Silva D."/>
            <person name="Sinclair B."/>
            <person name="Sperling S."/>
            <person name="Stupka E."/>
            <person name="Sugiura K."/>
            <person name="Sultana R."/>
            <person name="Takenaka Y."/>
            <person name="Taki K."/>
            <person name="Tammoja K."/>
            <person name="Tan S.L."/>
            <person name="Tang S."/>
            <person name="Taylor M.S."/>
            <person name="Tegner J."/>
            <person name="Teichmann S.A."/>
            <person name="Ueda H.R."/>
            <person name="van Nimwegen E."/>
            <person name="Verardo R."/>
            <person name="Wei C.L."/>
            <person name="Yagi K."/>
            <person name="Yamanishi H."/>
            <person name="Zabarovsky E."/>
            <person name="Zhu S."/>
            <person name="Zimmer A."/>
            <person name="Hide W."/>
            <person name="Bult C."/>
            <person name="Grimmond S.M."/>
            <person name="Teasdale R.D."/>
            <person name="Liu E.T."/>
            <person name="Brusic V."/>
            <person name="Quackenbush J."/>
            <person name="Wahlestedt C."/>
            <person name="Mattick J.S."/>
            <person name="Hume D.A."/>
            <person name="Kai C."/>
            <person name="Sasaki D."/>
            <person name="Tomaru Y."/>
            <person name="Fukuda S."/>
            <person name="Kanamori-Katayama M."/>
            <person name="Suzuki M."/>
            <person name="Aoki J."/>
            <person name="Arakawa T."/>
            <person name="Iida J."/>
            <person name="Imamura K."/>
            <person name="Itoh M."/>
            <person name="Kato T."/>
            <person name="Kawaji H."/>
            <person name="Kawagashira N."/>
            <person name="Kawashima T."/>
            <person name="Kojima M."/>
            <person name="Kondo S."/>
            <person name="Konno H."/>
            <person name="Nakano K."/>
            <person name="Ninomiya N."/>
            <person name="Nishio T."/>
            <person name="Okada M."/>
            <person name="Plessy C."/>
            <person name="Shibata K."/>
            <person name="Shiraki T."/>
            <person name="Suzuki S."/>
            <person name="Tagami M."/>
            <person name="Waki K."/>
            <person name="Watahiki A."/>
            <person name="Okamura-Oho Y."/>
            <person name="Suzuki H."/>
            <person name="Kawai J."/>
            <person name="Hayashizaki Y."/>
        </authorList>
    </citation>
    <scope>NUCLEOTIDE SEQUENCE [LARGE SCALE MRNA]</scope>
    <source>
        <strain>C57BL/6J</strain>
        <tissue>Egg</tissue>
        <tissue>Testis</tissue>
    </source>
</reference>
<reference key="2">
    <citation type="journal article" date="2004" name="Genome Res.">
        <title>The status, quality, and expansion of the NIH full-length cDNA project: the Mammalian Gene Collection (MGC).</title>
        <authorList>
            <consortium name="The MGC Project Team"/>
        </authorList>
    </citation>
    <scope>NUCLEOTIDE SEQUENCE [LARGE SCALE MRNA]</scope>
    <source>
        <tissue>Testis</tissue>
    </source>
</reference>
<reference key="3">
    <citation type="journal article" date="2006" name="BMC Biochem.">
        <title>Characterization of hARD2, a processed hARD1 gene duplicate, encoding a human protein N-alpha-acetyltransferase.</title>
        <authorList>
            <person name="Arnesen T."/>
            <person name="Betts M.J."/>
            <person name="Pendino F."/>
            <person name="Liberles D.A."/>
            <person name="Anderson D."/>
            <person name="Caro J."/>
            <person name="Kong X."/>
            <person name="Varhaug J.E."/>
            <person name="Lillehaug J.R."/>
        </authorList>
    </citation>
    <scope>IDENTIFICATION</scope>
</reference>
<reference key="4">
    <citation type="journal article" date="2010" name="Cell">
        <title>A tissue-specific atlas of mouse protein phosphorylation and expression.</title>
        <authorList>
            <person name="Huttlin E.L."/>
            <person name="Jedrychowski M.P."/>
            <person name="Elias J.E."/>
            <person name="Goswami T."/>
            <person name="Rad R."/>
            <person name="Beausoleil S.A."/>
            <person name="Villen J."/>
            <person name="Haas W."/>
            <person name="Sowa M.E."/>
            <person name="Gygi S.P."/>
        </authorList>
    </citation>
    <scope>IDENTIFICATION BY MASS SPECTROMETRY [LARGE SCALE ANALYSIS]</scope>
    <source>
        <tissue>Testis</tissue>
    </source>
</reference>
<keyword id="KW-0012">Acyltransferase</keyword>
<keyword id="KW-0963">Cytoplasm</keyword>
<keyword id="KW-0539">Nucleus</keyword>
<keyword id="KW-1185">Reference proteome</keyword>
<keyword id="KW-0808">Transferase</keyword>
<name>NAA11_MOUSE</name>
<organism>
    <name type="scientific">Mus musculus</name>
    <name type="common">Mouse</name>
    <dbReference type="NCBI Taxonomy" id="10090"/>
    <lineage>
        <taxon>Eukaryota</taxon>
        <taxon>Metazoa</taxon>
        <taxon>Chordata</taxon>
        <taxon>Craniata</taxon>
        <taxon>Vertebrata</taxon>
        <taxon>Euteleostomi</taxon>
        <taxon>Mammalia</taxon>
        <taxon>Eutheria</taxon>
        <taxon>Euarchontoglires</taxon>
        <taxon>Glires</taxon>
        <taxon>Rodentia</taxon>
        <taxon>Myomorpha</taxon>
        <taxon>Muroidea</taxon>
        <taxon>Muridae</taxon>
        <taxon>Murinae</taxon>
        <taxon>Mus</taxon>
        <taxon>Mus</taxon>
    </lineage>
</organism>
<accession>Q3UX61</accession>
<accession>Q3V0C7</accession>
<proteinExistence type="evidence at protein level"/>
<sequence length="218" mass="24671">MNIRNARPDDLMNMQHCNLLCLPENYQMKYYFYHGLSWPQLSYIAEDEDGKIVGYVLAKMEEDPDDVPHGHITSLAVKRSHRRLGLAQKLMDQASRAMIENFGAKYVSLHVRKSNRAALHLYSNTLNFQVSEVEPKYYADGEDAYAMKRDLSQMTDELRRQLVLKKNRYVVLGSEETQGGTLPDAGEACLPKNPTSKDSGSSDSTDVQDSSEDLDSIS</sequence>